<sequence>MRSPSAAWLLGGVLLLAASGSCNRTVPGNKSKGRSLIGNVDNSPVVAGRGVTVKPGFSVDEFSTSVLTGKLTTVFLPVVYTIVFVVGLPSNGMALWVFLFRTKKKHPAVIYMANLALADLLSVTWFPLKIAYHIHGNNWIYGESLCKVLIGFFYGNMYCSILFMTCLSVQRYWVIVNPMVHPKKQANIAIGVSLGIWLLILLLTIPLYVVKQTSYIRALNITTCHDVLPEEVLVGDMFNYFLSLAIGVFLFPAFLTASAYVLMIRTLQSSAMDESSGKKRRRAIKLIVTVLAMYLICFTPSNLLLVVHYFLIKTRGQSHVYALYIVALCLSTLNSCIDPFVYYFISQDFRDHAKNALLCRSVRTVKRMQVSLSSKKFSGKSSSYSSSSTSVKGSY</sequence>
<gene>
    <name type="primary">F2RL1</name>
    <name type="synonym">PAR2</name>
</gene>
<feature type="signal peptide" evidence="4">
    <location>
        <begin position="1"/>
        <end position="25"/>
    </location>
</feature>
<feature type="propeptide" id="PRO_0000239869" description="Removed for receptor activation" evidence="1">
    <location>
        <begin position="26"/>
        <end position="34"/>
    </location>
</feature>
<feature type="chain" id="PRO_0000239870" description="Proteinase-activated receptor 2">
    <location>
        <begin position="35"/>
        <end position="395"/>
    </location>
</feature>
<feature type="topological domain" description="Extracellular" evidence="2">
    <location>
        <begin position="35"/>
        <end position="69"/>
    </location>
</feature>
<feature type="transmembrane region" description="Helical; Name=1" evidence="2">
    <location>
        <begin position="70"/>
        <end position="99"/>
    </location>
</feature>
<feature type="topological domain" description="Cytoplasmic" evidence="2">
    <location>
        <begin position="100"/>
        <end position="106"/>
    </location>
</feature>
<feature type="transmembrane region" description="Helical; Name=2" evidence="2">
    <location>
        <begin position="107"/>
        <end position="135"/>
    </location>
</feature>
<feature type="topological domain" description="Extracellular" evidence="2">
    <location>
        <begin position="136"/>
        <end position="147"/>
    </location>
</feature>
<feature type="transmembrane region" description="Helical; Name=3" evidence="2">
    <location>
        <begin position="148"/>
        <end position="175"/>
    </location>
</feature>
<feature type="topological domain" description="Cytoplasmic" evidence="2">
    <location>
        <begin position="176"/>
        <end position="181"/>
    </location>
</feature>
<feature type="transmembrane region" description="Helical; Name=4" evidence="2">
    <location>
        <begin position="182"/>
        <end position="209"/>
    </location>
</feature>
<feature type="topological domain" description="Extracellular" evidence="2">
    <location>
        <begin position="210"/>
        <end position="233"/>
    </location>
</feature>
<feature type="transmembrane region" description="Helical; Name=5" evidence="2">
    <location>
        <begin position="234"/>
        <end position="267"/>
    </location>
</feature>
<feature type="topological domain" description="Cytoplasmic" evidence="2">
    <location>
        <begin position="268"/>
        <end position="275"/>
    </location>
</feature>
<feature type="transmembrane region" description="Helical; Name=6" evidence="2">
    <location>
        <begin position="276"/>
        <end position="315"/>
    </location>
</feature>
<feature type="topological domain" description="Extracellular" evidence="2">
    <location>
        <begin position="316"/>
        <end position="321"/>
    </location>
</feature>
<feature type="transmembrane region" description="Helical; Name=7" evidence="2">
    <location>
        <begin position="322"/>
        <end position="345"/>
    </location>
</feature>
<feature type="topological domain" description="Cytoplasmic" evidence="2">
    <location>
        <begin position="346"/>
        <end position="395"/>
    </location>
</feature>
<feature type="site" description="Cleavage; by trypsin" evidence="1">
    <location>
        <begin position="34"/>
        <end position="35"/>
    </location>
</feature>
<feature type="lipid moiety-binding region" description="S-palmitoyl cysteine" evidence="1">
    <location>
        <position position="359"/>
    </location>
</feature>
<feature type="glycosylation site" description="N-linked (GlcNAc...) asparagine" evidence="4">
    <location>
        <position position="23"/>
    </location>
</feature>
<feature type="glycosylation site" description="N-linked (GlcNAc...) asparagine" evidence="4">
    <location>
        <position position="29"/>
    </location>
</feature>
<feature type="glycosylation site" description="N-linked (GlcNAc...) asparagine" evidence="4">
    <location>
        <position position="220"/>
    </location>
</feature>
<feature type="disulfide bond" evidence="5">
    <location>
        <begin position="146"/>
        <end position="224"/>
    </location>
</feature>
<proteinExistence type="evidence at transcript level"/>
<protein>
    <recommendedName>
        <fullName>Proteinase-activated receptor 2</fullName>
        <shortName>PAR-2</shortName>
    </recommendedName>
    <alternativeName>
        <fullName>Coagulation factor II receptor-like 1</fullName>
    </alternativeName>
    <alternativeName>
        <fullName>Thrombin receptor-like 1</fullName>
    </alternativeName>
</protein>
<dbReference type="EMBL" id="BC113233">
    <property type="protein sequence ID" value="AAI13234.1"/>
    <property type="molecule type" value="mRNA"/>
</dbReference>
<dbReference type="RefSeq" id="NP_001039748.1">
    <property type="nucleotide sequence ID" value="NM_001046283.1"/>
</dbReference>
<dbReference type="SMR" id="Q2HJA4"/>
<dbReference type="FunCoup" id="Q2HJA4">
    <property type="interactions" value="241"/>
</dbReference>
<dbReference type="STRING" id="9913.ENSBTAP00000046225"/>
<dbReference type="GlyCosmos" id="Q2HJA4">
    <property type="glycosylation" value="3 sites, No reported glycans"/>
</dbReference>
<dbReference type="GlyGen" id="Q2HJA4">
    <property type="glycosylation" value="3 sites"/>
</dbReference>
<dbReference type="PaxDb" id="9913-ENSBTAP00000046225"/>
<dbReference type="GeneID" id="526525"/>
<dbReference type="KEGG" id="bta:526525"/>
<dbReference type="CTD" id="2150"/>
<dbReference type="eggNOG" id="ENOG502QR8S">
    <property type="taxonomic scope" value="Eukaryota"/>
</dbReference>
<dbReference type="InParanoid" id="Q2HJA4"/>
<dbReference type="OrthoDB" id="9370401at2759"/>
<dbReference type="Proteomes" id="UP000009136">
    <property type="component" value="Unplaced"/>
</dbReference>
<dbReference type="GO" id="GO:0005886">
    <property type="term" value="C:plasma membrane"/>
    <property type="evidence" value="ECO:0000318"/>
    <property type="project" value="GO_Central"/>
</dbReference>
<dbReference type="GO" id="GO:0031143">
    <property type="term" value="C:pseudopodium"/>
    <property type="evidence" value="ECO:0000250"/>
    <property type="project" value="UniProtKB"/>
</dbReference>
<dbReference type="GO" id="GO:0004930">
    <property type="term" value="F:G protein-coupled receptor activity"/>
    <property type="evidence" value="ECO:0000250"/>
    <property type="project" value="UniProtKB"/>
</dbReference>
<dbReference type="GO" id="GO:0001965">
    <property type="term" value="F:G-protein alpha-subunit binding"/>
    <property type="evidence" value="ECO:0000250"/>
    <property type="project" value="UniProtKB"/>
</dbReference>
<dbReference type="GO" id="GO:0031681">
    <property type="term" value="F:G-protein beta-subunit binding"/>
    <property type="evidence" value="ECO:0000250"/>
    <property type="project" value="UniProtKB"/>
</dbReference>
<dbReference type="GO" id="GO:0015057">
    <property type="term" value="F:thrombin-activated receptor activity"/>
    <property type="evidence" value="ECO:0007669"/>
    <property type="project" value="InterPro"/>
</dbReference>
<dbReference type="GO" id="GO:0007596">
    <property type="term" value="P:blood coagulation"/>
    <property type="evidence" value="ECO:0007669"/>
    <property type="project" value="InterPro"/>
</dbReference>
<dbReference type="GO" id="GO:0051607">
    <property type="term" value="P:defense response to virus"/>
    <property type="evidence" value="ECO:0000250"/>
    <property type="project" value="UniProtKB"/>
</dbReference>
<dbReference type="GO" id="GO:0007186">
    <property type="term" value="P:G protein-coupled receptor signaling pathway"/>
    <property type="evidence" value="ECO:0000318"/>
    <property type="project" value="GO_Central"/>
</dbReference>
<dbReference type="GO" id="GO:0006954">
    <property type="term" value="P:inflammatory response"/>
    <property type="evidence" value="ECO:0007669"/>
    <property type="project" value="UniProtKB-KW"/>
</dbReference>
<dbReference type="GO" id="GO:0045087">
    <property type="term" value="P:innate immune response"/>
    <property type="evidence" value="ECO:0007669"/>
    <property type="project" value="UniProtKB-KW"/>
</dbReference>
<dbReference type="GO" id="GO:0050900">
    <property type="term" value="P:leukocyte migration"/>
    <property type="evidence" value="ECO:0000250"/>
    <property type="project" value="UniProtKB"/>
</dbReference>
<dbReference type="GO" id="GO:0070661">
    <property type="term" value="P:leukocyte proliferation"/>
    <property type="evidence" value="ECO:0000250"/>
    <property type="project" value="UniProtKB"/>
</dbReference>
<dbReference type="GO" id="GO:0097029">
    <property type="term" value="P:mature conventional dendritic cell differentiation"/>
    <property type="evidence" value="ECO:0000250"/>
    <property type="project" value="UniProtKB"/>
</dbReference>
<dbReference type="GO" id="GO:0042119">
    <property type="term" value="P:neutrophil activation"/>
    <property type="evidence" value="ECO:0000250"/>
    <property type="project" value="UniProtKB"/>
</dbReference>
<dbReference type="GO" id="GO:0030335">
    <property type="term" value="P:positive regulation of cell migration"/>
    <property type="evidence" value="ECO:0000250"/>
    <property type="project" value="UniProtKB"/>
</dbReference>
<dbReference type="GO" id="GO:0032722">
    <property type="term" value="P:positive regulation of chemokine production"/>
    <property type="evidence" value="ECO:0000250"/>
    <property type="project" value="UniProtKB"/>
</dbReference>
<dbReference type="GO" id="GO:0050921">
    <property type="term" value="P:positive regulation of chemotaxis"/>
    <property type="evidence" value="ECO:0000250"/>
    <property type="project" value="UniProtKB"/>
</dbReference>
<dbReference type="GO" id="GO:0002720">
    <property type="term" value="P:positive regulation of cytokine production involved in immune response"/>
    <property type="evidence" value="ECO:0000250"/>
    <property type="project" value="UniProtKB"/>
</dbReference>
<dbReference type="GO" id="GO:0007204">
    <property type="term" value="P:positive regulation of cytosolic calcium ion concentration"/>
    <property type="evidence" value="ECO:0000250"/>
    <property type="project" value="UniProtKB"/>
</dbReference>
<dbReference type="GO" id="GO:0070374">
    <property type="term" value="P:positive regulation of ERK1 and ERK2 cascade"/>
    <property type="evidence" value="ECO:0000250"/>
    <property type="project" value="UniProtKB"/>
</dbReference>
<dbReference type="GO" id="GO:0032731">
    <property type="term" value="P:positive regulation of interleukin-1 beta production"/>
    <property type="evidence" value="ECO:0000250"/>
    <property type="project" value="UniProtKB"/>
</dbReference>
<dbReference type="GO" id="GO:0032733">
    <property type="term" value="P:positive regulation of interleukin-10 production"/>
    <property type="evidence" value="ECO:0000250"/>
    <property type="project" value="UniProtKB"/>
</dbReference>
<dbReference type="GO" id="GO:0032755">
    <property type="term" value="P:positive regulation of interleukin-6 production"/>
    <property type="evidence" value="ECO:0000250"/>
    <property type="project" value="UniProtKB"/>
</dbReference>
<dbReference type="GO" id="GO:0032757">
    <property type="term" value="P:positive regulation of interleukin-8 production"/>
    <property type="evidence" value="ECO:0000250"/>
    <property type="project" value="UniProtKB"/>
</dbReference>
<dbReference type="GO" id="GO:0051897">
    <property type="term" value="P:positive regulation of phosphatidylinositol 3-kinase/protein kinase B signal transduction"/>
    <property type="evidence" value="ECO:0000250"/>
    <property type="project" value="UniProtKB"/>
</dbReference>
<dbReference type="GO" id="GO:0031274">
    <property type="term" value="P:positive regulation of pseudopodium assembly"/>
    <property type="evidence" value="ECO:0000250"/>
    <property type="project" value="UniProtKB"/>
</dbReference>
<dbReference type="GO" id="GO:1900135">
    <property type="term" value="P:positive regulation of renin secretion into blood stream"/>
    <property type="evidence" value="ECO:0000250"/>
    <property type="project" value="UniProtKB"/>
</dbReference>
<dbReference type="GO" id="GO:0035025">
    <property type="term" value="P:positive regulation of Rho protein signal transduction"/>
    <property type="evidence" value="ECO:0000250"/>
    <property type="project" value="UniProtKB"/>
</dbReference>
<dbReference type="GO" id="GO:0032930">
    <property type="term" value="P:positive regulation of superoxide anion generation"/>
    <property type="evidence" value="ECO:0000250"/>
    <property type="project" value="UniProtKB"/>
</dbReference>
<dbReference type="GO" id="GO:0032729">
    <property type="term" value="P:positive regulation of type II interferon production"/>
    <property type="evidence" value="ECO:0000250"/>
    <property type="project" value="UniProtKB"/>
</dbReference>
<dbReference type="GO" id="GO:0043122">
    <property type="term" value="P:regulation of canonical NF-kappaB signal transduction"/>
    <property type="evidence" value="ECO:0000250"/>
    <property type="project" value="UniProtKB"/>
</dbReference>
<dbReference type="GO" id="GO:2000341">
    <property type="term" value="P:regulation of chemokine (C-X-C motif) ligand 2 production"/>
    <property type="evidence" value="ECO:0000250"/>
    <property type="project" value="UniProtKB"/>
</dbReference>
<dbReference type="GO" id="GO:0002286">
    <property type="term" value="P:T cell activation involved in immune response"/>
    <property type="evidence" value="ECO:0000250"/>
    <property type="project" value="UniProtKB"/>
</dbReference>
<dbReference type="GO" id="GO:0042311">
    <property type="term" value="P:vasodilation"/>
    <property type="evidence" value="ECO:0000250"/>
    <property type="project" value="UniProtKB"/>
</dbReference>
<dbReference type="FunFam" id="1.20.1070.10:FF:000040">
    <property type="entry name" value="Coagulation factor 2 (thrombin) receptor"/>
    <property type="match status" value="1"/>
</dbReference>
<dbReference type="Gene3D" id="1.20.1070.10">
    <property type="entry name" value="Rhodopsin 7-helix transmembrane proteins"/>
    <property type="match status" value="1"/>
</dbReference>
<dbReference type="InterPro" id="IPR000276">
    <property type="entry name" value="GPCR_Rhodpsn"/>
</dbReference>
<dbReference type="InterPro" id="IPR017452">
    <property type="entry name" value="GPCR_Rhodpsn_7TM"/>
</dbReference>
<dbReference type="InterPro" id="IPR002281">
    <property type="entry name" value="Pro_rcpt_2"/>
</dbReference>
<dbReference type="InterPro" id="IPR003912">
    <property type="entry name" value="Protea_act_rcpt"/>
</dbReference>
<dbReference type="PANTHER" id="PTHR24232">
    <property type="entry name" value="G-PROTEIN COUPLED RECEPTOR"/>
    <property type="match status" value="1"/>
</dbReference>
<dbReference type="PANTHER" id="PTHR24232:SF21">
    <property type="entry name" value="PROTEINASE-ACTIVATED RECEPTOR 2"/>
    <property type="match status" value="1"/>
</dbReference>
<dbReference type="Pfam" id="PF00001">
    <property type="entry name" value="7tm_1"/>
    <property type="match status" value="1"/>
</dbReference>
<dbReference type="PRINTS" id="PR00237">
    <property type="entry name" value="GPCRRHODOPSN"/>
</dbReference>
<dbReference type="PRINTS" id="PR01428">
    <property type="entry name" value="PROTEASEAR"/>
</dbReference>
<dbReference type="PRINTS" id="PR01152">
    <property type="entry name" value="PROTEASEAR2"/>
</dbReference>
<dbReference type="SUPFAM" id="SSF81321">
    <property type="entry name" value="Family A G protein-coupled receptor-like"/>
    <property type="match status" value="1"/>
</dbReference>
<dbReference type="PROSITE" id="PS50262">
    <property type="entry name" value="G_PROTEIN_RECEP_F1_2"/>
    <property type="match status" value="1"/>
</dbReference>
<reference key="1">
    <citation type="submission" date="2006-02" db="EMBL/GenBank/DDBJ databases">
        <authorList>
            <consortium name="NIH - Mammalian Gene Collection (MGC) project"/>
        </authorList>
    </citation>
    <scope>NUCLEOTIDE SEQUENCE [LARGE SCALE MRNA]</scope>
    <source>
        <strain>Hereford</strain>
        <tissue>Uterus</tissue>
    </source>
</reference>
<organism>
    <name type="scientific">Bos taurus</name>
    <name type="common">Bovine</name>
    <dbReference type="NCBI Taxonomy" id="9913"/>
    <lineage>
        <taxon>Eukaryota</taxon>
        <taxon>Metazoa</taxon>
        <taxon>Chordata</taxon>
        <taxon>Craniata</taxon>
        <taxon>Vertebrata</taxon>
        <taxon>Euteleostomi</taxon>
        <taxon>Mammalia</taxon>
        <taxon>Eutheria</taxon>
        <taxon>Laurasiatheria</taxon>
        <taxon>Artiodactyla</taxon>
        <taxon>Ruminantia</taxon>
        <taxon>Pecora</taxon>
        <taxon>Bovidae</taxon>
        <taxon>Bovinae</taxon>
        <taxon>Bos</taxon>
    </lineage>
</organism>
<name>PAR2_BOVIN</name>
<evidence type="ECO:0000250" key="1"/>
<evidence type="ECO:0000250" key="2">
    <source>
        <dbReference type="UniProtKB" id="P55085"/>
    </source>
</evidence>
<evidence type="ECO:0000250" key="3">
    <source>
        <dbReference type="UniProtKB" id="P55086"/>
    </source>
</evidence>
<evidence type="ECO:0000255" key="4"/>
<evidence type="ECO:0000255" key="5">
    <source>
        <dbReference type="PROSITE-ProRule" id="PRU00521"/>
    </source>
</evidence>
<accession>Q2HJA4</accession>
<comment type="function">
    <text evidence="2 3">Receptor for trypsin and trypsin-like enzymes coupled to G proteins. Its function is mediated through the activation of several signaling pathways including phospholipase C (PLC), intracellular calcium, mitogen-activated protein kinase (MAPK), I-kappaB kinase/NF-kappaB and Rho. Can also be transactivated by cleaved F2R/PAR1. Involved in modulation of inflammatory responses and regulation of innate and adaptive immunity, and acts as a sensor for proteolytic enzymes generated during infection. Generally is promoting inflammation. Can signal synergistically with TLR4 and probably TLR2 in inflammatory responses and modulates TLR3 signaling. Has a protective role in establishing the endothelial barrier; the activity involves coagulation factor X. Regulates endothelial cell barrier integrity during neutrophil extravasation, probably following proteolytic cleavage by PRTN3. Proposed to have a bronchoprotective role in airway epithelium, but also shown to compromise the airway epithelial barrier by interrupting E-cadherin adhesion. Involved in the regulation of vascular tone; activation results in hypotension presumably mediated by vasodilation. Associates with a subset of G proteins alpha subunits such as GNAQ, GNA11, GNA14, GNA12 and GNA13, but probably not with G(o) alpha, G(i) subunit alpha-1 and G(i) subunit alpha-2. Believed to be a class B receptor which internalizes as a complex with arrestin and traffic with it to endosomal vesicles, presumably as desensitized receptor, for extended periods of time. Mediates inhibition of TNF-alpha stimulated JNK phosphorylation via coupling to GNAQ and GNA11; the function involves dissociation of RIPK1 and TRADD from TNFR1. Mediates phosphorylation of nuclear factor NF-kappa-B RELA subunit at 'Ser-536'; the function involves IKBKB and is predominantly independent of G proteins. Involved in cellular migration. Involved in cytoskeletal rearrangement and chemotaxis through beta-arrestin-promoted scaffolds; the function is independent of GNAQ and GNA11 and involves promotion of cofilin dephosphorylation and actin filament severing. Induces redistribution of COPS5 from the plasma membrane to the cytosol and activation of the JNK cascade is mediated by COPS5. Involved in the recruitment of leukocytes to the sites of inflammation and is the major PAR receptor capable of modulating eosinophil function such as pro-inflammatory cytokine secretion, superoxide production and degranulation. During inflammation promotes dendritic cell maturation, trafficking to the lymph nodes and subsequent T-cell activation. Involved in antimicrobial response of innate immune cells; activation enhances phagocytosis of Gram-positive and killing of Gram-negative bacteria. Acts synergistically with interferon-gamma in enhancing antiviral responses. Probably mediates activation of pro-inflammatory and pro-fibrotic responses in fibroblasts, triggered by coagulation factor Xa (F10) (By similarity). Probably mediates activation of barrier protective signaling responses in endothelial cells, triggered by coagulation factor Xa (F10) (By similarity).</text>
</comment>
<comment type="subunit">
    <text evidence="1">Interacts with TLR4, COPS5 and TMED2. Interacts with GNAQ, GNA11, GNA12, GNA13 and GNA14 (By similarity).</text>
</comment>
<comment type="subcellular location">
    <subcellularLocation>
        <location evidence="1">Cell membrane</location>
        <topology>Multi-pass membrane protein</topology>
    </subcellularLocation>
</comment>
<comment type="PTM">
    <text evidence="2">A proteolytic cleavage generates a new N-terminus that functions as a tethered ligand. Activating serine proteases include trypsin, mast cell tryptase, coagulation factors VII and Xa, myeloblastin/PRTN3 and membrane-type serine protease 1/ST14. Proposed subsequent cleavage by serine proteases is leading to receptor deactivation and include neutrophil elastase and cathepsin G. At least in part, implicated proteases are also shown to activate the receptor; the glycosylation status of the receptor is thought to contribute to the difference.</text>
</comment>
<comment type="PTM">
    <text evidence="2">N-glycosylated and sialylated.</text>
</comment>
<comment type="PTM">
    <text>Multiple phosphorylated on serine and threonine residues in the cytoplasmic region upon receptor activation; required for receptor desensitization and recruitment of beta-arrestin.</text>
</comment>
<comment type="PTM">
    <text evidence="1">Monoubiquitinated by CBL at the plasma membrane and in early endosomes; not required for receptor endocytosis but for translocation to late endosomes or lysosomes. Deubiquitination involves STAMBP and USP8; required for lysosomal trafficking and receptor degradation (By similarity).</text>
</comment>
<comment type="miscellaneous">
    <text evidence="1">Synthetic PAR agonist peptides (APs) that mimic the first six amino acids of the newly formed N-terminus activate the native, uncleaved receptor nonenzymatically by binding directly to the corresponding second extracellular loop to mediate signaling.</text>
</comment>
<comment type="similarity">
    <text evidence="5">Belongs to the G-protein coupled receptor 1 family.</text>
</comment>
<keyword id="KW-1003">Cell membrane</keyword>
<keyword id="KW-1015">Disulfide bond</keyword>
<keyword id="KW-0297">G-protein coupled receptor</keyword>
<keyword id="KW-0325">Glycoprotein</keyword>
<keyword id="KW-0391">Immunity</keyword>
<keyword id="KW-0395">Inflammatory response</keyword>
<keyword id="KW-0399">Innate immunity</keyword>
<keyword id="KW-0449">Lipoprotein</keyword>
<keyword id="KW-0472">Membrane</keyword>
<keyword id="KW-0564">Palmitate</keyword>
<keyword id="KW-0597">Phosphoprotein</keyword>
<keyword id="KW-0675">Receptor</keyword>
<keyword id="KW-1185">Reference proteome</keyword>
<keyword id="KW-0732">Signal</keyword>
<keyword id="KW-0807">Transducer</keyword>
<keyword id="KW-0812">Transmembrane</keyword>
<keyword id="KW-1133">Transmembrane helix</keyword>
<keyword id="KW-0832">Ubl conjugation</keyword>